<keyword id="KW-0325">Glycoprotein</keyword>
<keyword id="KW-0472">Membrane</keyword>
<keyword id="KW-0812">Transmembrane</keyword>
<keyword id="KW-1133">Transmembrane helix</keyword>
<keyword id="KW-0813">Transport</keyword>
<protein>
    <recommendedName>
        <fullName evidence="5">Transmembrane transporter swnT</fullName>
    </recommendedName>
    <alternativeName>
        <fullName evidence="5">Swainsonine biosynthesis gene cluster protein T</fullName>
    </alternativeName>
</protein>
<gene>
    <name evidence="5" type="primary">swnT</name>
    <name type="ORF">MAA_08619</name>
</gene>
<evidence type="ECO:0000255" key="1"/>
<evidence type="ECO:0000255" key="2">
    <source>
        <dbReference type="PROSITE-ProRule" id="PRU00498"/>
    </source>
</evidence>
<evidence type="ECO:0000269" key="3">
    <source>
    </source>
</evidence>
<evidence type="ECO:0000269" key="4">
    <source>
    </source>
</evidence>
<evidence type="ECO:0000303" key="5">
    <source>
    </source>
</evidence>
<evidence type="ECO:0000305" key="6"/>
<organism>
    <name type="scientific">Metarhizium robertsii (strain ARSEF 23 / ATCC MYA-3075)</name>
    <name type="common">Metarhizium anisopliae (strain ARSEF 23)</name>
    <dbReference type="NCBI Taxonomy" id="655844"/>
    <lineage>
        <taxon>Eukaryota</taxon>
        <taxon>Fungi</taxon>
        <taxon>Dikarya</taxon>
        <taxon>Ascomycota</taxon>
        <taxon>Pezizomycotina</taxon>
        <taxon>Sordariomycetes</taxon>
        <taxon>Hypocreomycetidae</taxon>
        <taxon>Hypocreales</taxon>
        <taxon>Clavicipitaceae</taxon>
        <taxon>Metarhizium</taxon>
    </lineage>
</organism>
<sequence length="496" mass="53807">MAKLGTMPPQHAAKPVDEHAARLIPEDSVPIQTQKPFTTLSAIGIGYGVTNTAVGIPLILSTAMPMGGSPQVFWGFLAMAAVGLATATTLAELVSAMPHPGGQYIWVNALAPKRYRRGLSYTTAMISWVAAVATGSSGNLSVPLNAFSIVTLLQPDFVYRRWMGFAAFQAINVVTCFGACFEHALPKLSKAFLLFNVVSVGVIIVALFAMADARTSAKDFFTTVNTSGWPDGVAFIIGLNGANWCFSCLDVATHLAEEIPSPGTNIPKALLWTIFIASTSGLLVVLAVLVNLGPVDVSDYSGIGIFYRITGSKAAAIGLWIPVLILVLASVWSIQTWQSRLAWTISRESGFPLHRHFSKIFPAPFYTPIWSLVGSAVGTALFGCLYLASELAFNSLIATGILLQYISYSIPTVLVLWQGRRNFRHGQFWYPRLGLVANFIMLAWTVVAFVFYCFPANAQVRPSQMNYVSGVLVVIATFIAALWILYARKNYRVMEI</sequence>
<comment type="function">
    <text evidence="3 4">Transmembrane transporter; part of the gene cluster that mediates the biosynthesis of swainsonine, a cytotoxic fungal alkaloid and a potential cancer therapy drug (PubMed:28381497). Does not mediate the secretion of SW and the exact role of swnT in SW biosynthesis remains to be determined (PubMed:32786262).</text>
</comment>
<comment type="subcellular location">
    <subcellularLocation>
        <location evidence="1">Membrane</location>
        <topology evidence="1">Multi-pass membrane protein</topology>
    </subcellularLocation>
</comment>
<comment type="disruption phenotype">
    <text evidence="4">Leads to lower intracellular accumulation of SW and higher extracellular yield of SW.</text>
</comment>
<comment type="similarity">
    <text evidence="6">Belongs to the amino acid-polyamine-organocation (APC) superfamily. Amino acid/choline transporter (ACT) (TC 2.A.3.4) family.</text>
</comment>
<accession>E9F8M0</accession>
<dbReference type="EMBL" id="ADNJ02000001">
    <property type="protein sequence ID" value="EFY95966.2"/>
    <property type="molecule type" value="Genomic_DNA"/>
</dbReference>
<dbReference type="RefSeq" id="XP_007824808.2">
    <property type="nucleotide sequence ID" value="XM_007826617.2"/>
</dbReference>
<dbReference type="SMR" id="E9F8M0"/>
<dbReference type="GlyCosmos" id="E9F8M0">
    <property type="glycosylation" value="1 site, No reported glycans"/>
</dbReference>
<dbReference type="GeneID" id="19262905"/>
<dbReference type="KEGG" id="maj:MAA_08619"/>
<dbReference type="HOGENOM" id="CLU_004495_2_4_1"/>
<dbReference type="OrthoDB" id="3257095at2759"/>
<dbReference type="Proteomes" id="UP000002498">
    <property type="component" value="Unassembled WGS sequence"/>
</dbReference>
<dbReference type="GO" id="GO:0016020">
    <property type="term" value="C:membrane"/>
    <property type="evidence" value="ECO:0007669"/>
    <property type="project" value="UniProtKB-SubCell"/>
</dbReference>
<dbReference type="GO" id="GO:0022857">
    <property type="term" value="F:transmembrane transporter activity"/>
    <property type="evidence" value="ECO:0007669"/>
    <property type="project" value="InterPro"/>
</dbReference>
<dbReference type="Gene3D" id="1.20.1740.10">
    <property type="entry name" value="Amino acid/polyamine transporter I"/>
    <property type="match status" value="1"/>
</dbReference>
<dbReference type="InterPro" id="IPR002293">
    <property type="entry name" value="AA/rel_permease1"/>
</dbReference>
<dbReference type="PANTHER" id="PTHR45649">
    <property type="entry name" value="AMINO-ACID PERMEASE BAT1"/>
    <property type="match status" value="1"/>
</dbReference>
<dbReference type="PANTHER" id="PTHR45649:SF7">
    <property type="entry name" value="CHOLINE TRANSPORT PROTEIN"/>
    <property type="match status" value="1"/>
</dbReference>
<dbReference type="Pfam" id="PF13520">
    <property type="entry name" value="AA_permease_2"/>
    <property type="match status" value="1"/>
</dbReference>
<dbReference type="PIRSF" id="PIRSF006060">
    <property type="entry name" value="AA_transporter"/>
    <property type="match status" value="1"/>
</dbReference>
<name>SWNT_METRA</name>
<reference key="1">
    <citation type="journal article" date="2011" name="PLoS Genet.">
        <title>Genome sequencing and comparative transcriptomics of the model entomopathogenic fungi Metarhizium anisopliae and M. acridum.</title>
        <authorList>
            <person name="Gao Q."/>
            <person name="Jin K."/>
            <person name="Ying S.-H."/>
            <person name="Zhang Y."/>
            <person name="Xiao G."/>
            <person name="Shang Y."/>
            <person name="Duan Z."/>
            <person name="Hu X."/>
            <person name="Xie X.-Q."/>
            <person name="Zhou G."/>
            <person name="Peng G."/>
            <person name="Luo Z."/>
            <person name="Huang W."/>
            <person name="Wang B."/>
            <person name="Fang W."/>
            <person name="Wang S."/>
            <person name="Zhong Y."/>
            <person name="Ma L.-J."/>
            <person name="St Leger R.J."/>
            <person name="Zhao G.-P."/>
            <person name="Pei Y."/>
            <person name="Feng M.-G."/>
            <person name="Xia Y."/>
            <person name="Wang C."/>
        </authorList>
    </citation>
    <scope>NUCLEOTIDE SEQUENCE [LARGE SCALE GENOMIC DNA]</scope>
    <source>
        <strain>ARSEF 23 / ATCC MYA-3075</strain>
    </source>
</reference>
<reference key="2">
    <citation type="journal article" date="2014" name="Proc. Natl. Acad. Sci. U.S.A.">
        <title>Trajectory and genomic determinants of fungal-pathogen speciation and host adaptation.</title>
        <authorList>
            <person name="Hu X."/>
            <person name="Xiao G."/>
            <person name="Zheng P."/>
            <person name="Shang Y."/>
            <person name="Su Y."/>
            <person name="Zhang X."/>
            <person name="Liu X."/>
            <person name="Zhan S."/>
            <person name="St Leger R.J."/>
            <person name="Wang C."/>
        </authorList>
    </citation>
    <scope>GENOME REANNOTATION</scope>
    <source>
        <strain>ARSEF 23 / ATCC MYA-3075</strain>
    </source>
</reference>
<reference key="3">
    <citation type="journal article" date="2017" name="G3 (Bethesda)">
        <title>Swainsonine biosynthesis genes in diverse symbiotic and pathogenic fungi.</title>
        <authorList>
            <person name="Cook D."/>
            <person name="Donzelli B.G."/>
            <person name="Creamer R."/>
            <person name="Baucom D.L."/>
            <person name="Gardner D.R."/>
            <person name="Pan J."/>
            <person name="Moore N."/>
            <person name="Jaromczyk J.W."/>
            <person name="Schardl C.L."/>
        </authorList>
    </citation>
    <scope>FUNCTION</scope>
    <scope>PATHWAY</scope>
</reference>
<reference key="4">
    <citation type="journal article" date="2020" name="ACS Chem. Biol.">
        <title>Unveiling of Swainsonine Biosynthesis via a Multibranched Pathway in Fungi.</title>
        <authorList>
            <person name="Luo F."/>
            <person name="Hong S."/>
            <person name="Chen B."/>
            <person name="Yin Y."/>
            <person name="Tang G."/>
            <person name="Hu F."/>
            <person name="Zhang H."/>
            <person name="Wang C."/>
        </authorList>
    </citation>
    <scope>FUNCTION</scope>
    <scope>DISRUPTION PHENOTYPE</scope>
</reference>
<proteinExistence type="inferred from homology"/>
<feature type="chain" id="PRO_0000441190" description="Transmembrane transporter swnT">
    <location>
        <begin position="1"/>
        <end position="496"/>
    </location>
</feature>
<feature type="transmembrane region" description="Helical" evidence="1">
    <location>
        <begin position="40"/>
        <end position="60"/>
    </location>
</feature>
<feature type="transmembrane region" description="Helical" evidence="1">
    <location>
        <begin position="72"/>
        <end position="92"/>
    </location>
</feature>
<feature type="transmembrane region" description="Helical" evidence="1">
    <location>
        <begin position="124"/>
        <end position="144"/>
    </location>
</feature>
<feature type="transmembrane region" description="Helical" evidence="1">
    <location>
        <begin position="162"/>
        <end position="182"/>
    </location>
</feature>
<feature type="transmembrane region" description="Helical" evidence="1">
    <location>
        <begin position="191"/>
        <end position="211"/>
    </location>
</feature>
<feature type="transmembrane region" description="Helical" evidence="1">
    <location>
        <begin position="270"/>
        <end position="290"/>
    </location>
</feature>
<feature type="transmembrane region" description="Helical" evidence="1">
    <location>
        <begin position="314"/>
        <end position="334"/>
    </location>
</feature>
<feature type="transmembrane region" description="Helical" evidence="1">
    <location>
        <begin position="368"/>
        <end position="388"/>
    </location>
</feature>
<feature type="transmembrane region" description="Helical" evidence="1">
    <location>
        <begin position="396"/>
        <end position="416"/>
    </location>
</feature>
<feature type="transmembrane region" description="Helical" evidence="1">
    <location>
        <begin position="434"/>
        <end position="454"/>
    </location>
</feature>
<feature type="transmembrane region" description="Helical" evidence="1">
    <location>
        <begin position="467"/>
        <end position="487"/>
    </location>
</feature>
<feature type="glycosylation site" description="N-linked (GlcNAc...) asparagine" evidence="2">
    <location>
        <position position="225"/>
    </location>
</feature>